<organism>
    <name type="scientific">Leptospira interrogans serogroup Icterohaemorrhagiae serovar copenhageni (strain Fiocruz L1-130)</name>
    <dbReference type="NCBI Taxonomy" id="267671"/>
    <lineage>
        <taxon>Bacteria</taxon>
        <taxon>Pseudomonadati</taxon>
        <taxon>Spirochaetota</taxon>
        <taxon>Spirochaetia</taxon>
        <taxon>Leptospirales</taxon>
        <taxon>Leptospiraceae</taxon>
        <taxon>Leptospira</taxon>
    </lineage>
</organism>
<comment type="function">
    <text evidence="1">Binds the 23S rRNA.</text>
</comment>
<comment type="subunit">
    <text evidence="1">Part of the 50S ribosomal subunit.</text>
</comment>
<comment type="similarity">
    <text evidence="1">Belongs to the bacterial ribosomal protein bL31 family. Type A subfamily.</text>
</comment>
<proteinExistence type="inferred from homology"/>
<name>RL31_LEPIC</name>
<keyword id="KW-0687">Ribonucleoprotein</keyword>
<keyword id="KW-0689">Ribosomal protein</keyword>
<keyword id="KW-0694">RNA-binding</keyword>
<keyword id="KW-0699">rRNA-binding</keyword>
<protein>
    <recommendedName>
        <fullName evidence="1">Large ribosomal subunit protein bL31</fullName>
    </recommendedName>
    <alternativeName>
        <fullName evidence="2">50S ribosomal protein L31</fullName>
    </alternativeName>
</protein>
<dbReference type="EMBL" id="AE016823">
    <property type="protein sequence ID" value="AAS71197.1"/>
    <property type="molecule type" value="Genomic_DNA"/>
</dbReference>
<dbReference type="RefSeq" id="WP_000845534.1">
    <property type="nucleotide sequence ID" value="NC_005823.1"/>
</dbReference>
<dbReference type="SMR" id="Q72P39"/>
<dbReference type="GeneID" id="61173326"/>
<dbReference type="KEGG" id="lic:LIC_12637"/>
<dbReference type="HOGENOM" id="CLU_114306_4_0_12"/>
<dbReference type="Proteomes" id="UP000007037">
    <property type="component" value="Chromosome I"/>
</dbReference>
<dbReference type="GO" id="GO:1990904">
    <property type="term" value="C:ribonucleoprotein complex"/>
    <property type="evidence" value="ECO:0007669"/>
    <property type="project" value="UniProtKB-KW"/>
</dbReference>
<dbReference type="GO" id="GO:0005840">
    <property type="term" value="C:ribosome"/>
    <property type="evidence" value="ECO:0007669"/>
    <property type="project" value="UniProtKB-KW"/>
</dbReference>
<dbReference type="GO" id="GO:0019843">
    <property type="term" value="F:rRNA binding"/>
    <property type="evidence" value="ECO:0007669"/>
    <property type="project" value="UniProtKB-KW"/>
</dbReference>
<dbReference type="GO" id="GO:0003735">
    <property type="term" value="F:structural constituent of ribosome"/>
    <property type="evidence" value="ECO:0007669"/>
    <property type="project" value="InterPro"/>
</dbReference>
<dbReference type="GO" id="GO:0006412">
    <property type="term" value="P:translation"/>
    <property type="evidence" value="ECO:0007669"/>
    <property type="project" value="UniProtKB-UniRule"/>
</dbReference>
<dbReference type="Gene3D" id="4.10.830.30">
    <property type="entry name" value="Ribosomal protein L31"/>
    <property type="match status" value="1"/>
</dbReference>
<dbReference type="HAMAP" id="MF_00501">
    <property type="entry name" value="Ribosomal_bL31_1"/>
    <property type="match status" value="1"/>
</dbReference>
<dbReference type="InterPro" id="IPR034704">
    <property type="entry name" value="Ribosomal_bL28/bL31-like_sf"/>
</dbReference>
<dbReference type="InterPro" id="IPR002150">
    <property type="entry name" value="Ribosomal_bL31"/>
</dbReference>
<dbReference type="InterPro" id="IPR027491">
    <property type="entry name" value="Ribosomal_bL31_A"/>
</dbReference>
<dbReference type="InterPro" id="IPR042105">
    <property type="entry name" value="Ribosomal_bL31_sf"/>
</dbReference>
<dbReference type="NCBIfam" id="TIGR00105">
    <property type="entry name" value="L31"/>
    <property type="match status" value="1"/>
</dbReference>
<dbReference type="NCBIfam" id="NF000612">
    <property type="entry name" value="PRK00019.1"/>
    <property type="match status" value="1"/>
</dbReference>
<dbReference type="PANTHER" id="PTHR33280">
    <property type="entry name" value="50S RIBOSOMAL PROTEIN L31, CHLOROPLASTIC"/>
    <property type="match status" value="1"/>
</dbReference>
<dbReference type="PANTHER" id="PTHR33280:SF1">
    <property type="entry name" value="LARGE RIBOSOMAL SUBUNIT PROTEIN BL31C"/>
    <property type="match status" value="1"/>
</dbReference>
<dbReference type="Pfam" id="PF01197">
    <property type="entry name" value="Ribosomal_L31"/>
    <property type="match status" value="1"/>
</dbReference>
<dbReference type="PRINTS" id="PR01249">
    <property type="entry name" value="RIBOSOMALL31"/>
</dbReference>
<dbReference type="SUPFAM" id="SSF143800">
    <property type="entry name" value="L28p-like"/>
    <property type="match status" value="1"/>
</dbReference>
<dbReference type="PROSITE" id="PS01143">
    <property type="entry name" value="RIBOSOMAL_L31"/>
    <property type="match status" value="1"/>
</dbReference>
<sequence>MKTEIHPNYKAAKISCASCGTVYETRTSIGDINIEICSACHPFFTGKSKLVDTTGRVDKFKKKYKMQ</sequence>
<reference key="1">
    <citation type="journal article" date="2004" name="J. Bacteriol.">
        <title>Comparative genomics of two Leptospira interrogans serovars reveals novel insights into physiology and pathogenesis.</title>
        <authorList>
            <person name="Nascimento A.L.T.O."/>
            <person name="Ko A.I."/>
            <person name="Martins E.A.L."/>
            <person name="Monteiro-Vitorello C.B."/>
            <person name="Ho P.L."/>
            <person name="Haake D.A."/>
            <person name="Verjovski-Almeida S."/>
            <person name="Hartskeerl R.A."/>
            <person name="Marques M.V."/>
            <person name="Oliveira M.C."/>
            <person name="Menck C.F.M."/>
            <person name="Leite L.C.C."/>
            <person name="Carrer H."/>
            <person name="Coutinho L.L."/>
            <person name="Degrave W.M."/>
            <person name="Dellagostin O.A."/>
            <person name="El-Dorry H."/>
            <person name="Ferro E.S."/>
            <person name="Ferro M.I.T."/>
            <person name="Furlan L.R."/>
            <person name="Gamberini M."/>
            <person name="Giglioti E.A."/>
            <person name="Goes-Neto A."/>
            <person name="Goldman G.H."/>
            <person name="Goldman M.H.S."/>
            <person name="Harakava R."/>
            <person name="Jeronimo S.M.B."/>
            <person name="Junqueira-de-Azevedo I.L.M."/>
            <person name="Kimura E.T."/>
            <person name="Kuramae E.E."/>
            <person name="Lemos E.G.M."/>
            <person name="Lemos M.V.F."/>
            <person name="Marino C.L."/>
            <person name="Nunes L.R."/>
            <person name="de Oliveira R.C."/>
            <person name="Pereira G.G."/>
            <person name="Reis M.S."/>
            <person name="Schriefer A."/>
            <person name="Siqueira W.J."/>
            <person name="Sommer P."/>
            <person name="Tsai S.M."/>
            <person name="Simpson A.J.G."/>
            <person name="Ferro J.A."/>
            <person name="Camargo L.E.A."/>
            <person name="Kitajima J.P."/>
            <person name="Setubal J.C."/>
            <person name="Van Sluys M.A."/>
        </authorList>
    </citation>
    <scope>NUCLEOTIDE SEQUENCE [LARGE SCALE GENOMIC DNA]</scope>
    <source>
        <strain>Fiocruz L1-130</strain>
    </source>
</reference>
<evidence type="ECO:0000255" key="1">
    <source>
        <dbReference type="HAMAP-Rule" id="MF_00501"/>
    </source>
</evidence>
<evidence type="ECO:0000305" key="2"/>
<accession>Q72P39</accession>
<feature type="chain" id="PRO_0000173121" description="Large ribosomal subunit protein bL31">
    <location>
        <begin position="1"/>
        <end position="67"/>
    </location>
</feature>
<gene>
    <name evidence="1" type="primary">rpmE</name>
    <name type="ordered locus">LIC_12637</name>
</gene>